<keyword id="KW-0024">Alternative initiation</keyword>
<keyword id="KW-0067">ATP-binding</keyword>
<keyword id="KW-0106">Calcium</keyword>
<keyword id="KW-0158">Chromosome</keyword>
<keyword id="KW-0963">Cytoplasm</keyword>
<keyword id="KW-0217">Developmental protein</keyword>
<keyword id="KW-0221">Differentiation</keyword>
<keyword id="KW-0418">Kinase</keyword>
<keyword id="KW-0449">Lipoprotein</keyword>
<keyword id="KW-0460">Magnesium</keyword>
<keyword id="KW-0472">Membrane</keyword>
<keyword id="KW-0479">Metal-binding</keyword>
<keyword id="KW-0519">Myristate</keyword>
<keyword id="KW-0547">Nucleotide-binding</keyword>
<keyword id="KW-0597">Phosphoprotein</keyword>
<keyword id="KW-1185">Reference proteome</keyword>
<keyword id="KW-0677">Repeat</keyword>
<keyword id="KW-0723">Serine/threonine-protein kinase</keyword>
<keyword id="KW-0808">Transferase</keyword>
<feature type="initiator methionine" description="Removed" evidence="16">
    <location>
        <position position="1"/>
    </location>
</feature>
<feature type="chain" id="PRO_0000085841" description="Calcium-dependent protein kinase 4">
    <location>
        <begin position="2"/>
        <end position="528"/>
    </location>
</feature>
<feature type="domain" description="Protein kinase" evidence="2">
    <location>
        <begin position="70"/>
        <end position="328"/>
    </location>
</feature>
<feature type="domain" description="EF-hand 1" evidence="3">
    <location>
        <begin position="376"/>
        <end position="411"/>
    </location>
</feature>
<feature type="domain" description="EF-hand 2" evidence="3">
    <location>
        <begin position="423"/>
        <end position="458"/>
    </location>
</feature>
<feature type="domain" description="EF-hand 3" evidence="3">
    <location>
        <begin position="459"/>
        <end position="494"/>
    </location>
</feature>
<feature type="domain" description="EF-hand 4" evidence="3">
    <location>
        <begin position="498"/>
        <end position="528"/>
    </location>
</feature>
<feature type="region of interest" description="Disordered" evidence="5">
    <location>
        <begin position="1"/>
        <end position="36"/>
    </location>
</feature>
<feature type="region of interest" description="J domain" evidence="1">
    <location>
        <begin position="350"/>
        <end position="386"/>
    </location>
</feature>
<feature type="short sequence motif" description="J domain autoinhibitory motif" evidence="1">
    <location>
        <begin position="350"/>
        <end position="358"/>
    </location>
</feature>
<feature type="short sequence motif" description="J domain EF-hand interaction motif" evidence="1">
    <location>
        <begin position="359"/>
        <end position="368"/>
    </location>
</feature>
<feature type="compositionally biased region" description="Polar residues" evidence="5">
    <location>
        <begin position="1"/>
        <end position="16"/>
    </location>
</feature>
<feature type="active site" description="Proton acceptor" evidence="2 4">
    <location>
        <position position="193"/>
    </location>
</feature>
<feature type="binding site" evidence="2">
    <location>
        <begin position="76"/>
        <end position="84"/>
    </location>
    <ligand>
        <name>ATP</name>
        <dbReference type="ChEBI" id="CHEBI:30616"/>
    </ligand>
</feature>
<feature type="binding site" evidence="2">
    <location>
        <position position="99"/>
    </location>
    <ligand>
        <name>ATP</name>
        <dbReference type="ChEBI" id="CHEBI:30616"/>
    </ligand>
</feature>
<feature type="binding site" evidence="3">
    <location>
        <position position="389"/>
    </location>
    <ligand>
        <name>Ca(2+)</name>
        <dbReference type="ChEBI" id="CHEBI:29108"/>
        <label>1</label>
    </ligand>
</feature>
<feature type="binding site" evidence="3">
    <location>
        <position position="391"/>
    </location>
    <ligand>
        <name>Ca(2+)</name>
        <dbReference type="ChEBI" id="CHEBI:29108"/>
        <label>1</label>
    </ligand>
</feature>
<feature type="binding site" evidence="3">
    <location>
        <position position="393"/>
    </location>
    <ligand>
        <name>Ca(2+)</name>
        <dbReference type="ChEBI" id="CHEBI:29108"/>
        <label>1</label>
    </ligand>
</feature>
<feature type="binding site" evidence="3">
    <location>
        <position position="395"/>
    </location>
    <ligand>
        <name>Ca(2+)</name>
        <dbReference type="ChEBI" id="CHEBI:29108"/>
        <label>1</label>
    </ligand>
</feature>
<feature type="binding site" evidence="3">
    <location>
        <position position="400"/>
    </location>
    <ligand>
        <name>Ca(2+)</name>
        <dbReference type="ChEBI" id="CHEBI:29108"/>
        <label>1</label>
    </ligand>
</feature>
<feature type="binding site" evidence="3">
    <location>
        <position position="436"/>
    </location>
    <ligand>
        <name>Ca(2+)</name>
        <dbReference type="ChEBI" id="CHEBI:29108"/>
        <label>2</label>
    </ligand>
</feature>
<feature type="binding site" evidence="3">
    <location>
        <position position="438"/>
    </location>
    <ligand>
        <name>Ca(2+)</name>
        <dbReference type="ChEBI" id="CHEBI:29108"/>
        <label>2</label>
    </ligand>
</feature>
<feature type="binding site" evidence="3">
    <location>
        <position position="440"/>
    </location>
    <ligand>
        <name>Ca(2+)</name>
        <dbReference type="ChEBI" id="CHEBI:29108"/>
        <label>2</label>
    </ligand>
</feature>
<feature type="binding site" evidence="3">
    <location>
        <position position="442"/>
    </location>
    <ligand>
        <name>Ca(2+)</name>
        <dbReference type="ChEBI" id="CHEBI:29108"/>
        <label>2</label>
    </ligand>
</feature>
<feature type="binding site" evidence="3">
    <location>
        <position position="447"/>
    </location>
    <ligand>
        <name>Ca(2+)</name>
        <dbReference type="ChEBI" id="CHEBI:29108"/>
        <label>2</label>
    </ligand>
</feature>
<feature type="binding site" evidence="3">
    <location>
        <position position="472"/>
    </location>
    <ligand>
        <name>Ca(2+)</name>
        <dbReference type="ChEBI" id="CHEBI:29108"/>
        <label>3</label>
    </ligand>
</feature>
<feature type="binding site" evidence="3">
    <location>
        <position position="474"/>
    </location>
    <ligand>
        <name>Ca(2+)</name>
        <dbReference type="ChEBI" id="CHEBI:29108"/>
        <label>3</label>
    </ligand>
</feature>
<feature type="binding site" evidence="3">
    <location>
        <position position="476"/>
    </location>
    <ligand>
        <name>Ca(2+)</name>
        <dbReference type="ChEBI" id="CHEBI:29108"/>
        <label>3</label>
    </ligand>
</feature>
<feature type="binding site" evidence="3">
    <location>
        <position position="478"/>
    </location>
    <ligand>
        <name>Ca(2+)</name>
        <dbReference type="ChEBI" id="CHEBI:29108"/>
        <label>3</label>
    </ligand>
</feature>
<feature type="binding site" evidence="3">
    <location>
        <position position="483"/>
    </location>
    <ligand>
        <name>Ca(2+)</name>
        <dbReference type="ChEBI" id="CHEBI:29108"/>
        <label>3</label>
    </ligand>
</feature>
<feature type="binding site" evidence="3">
    <location>
        <position position="506"/>
    </location>
    <ligand>
        <name>Ca(2+)</name>
        <dbReference type="ChEBI" id="CHEBI:29108"/>
        <label>4</label>
    </ligand>
</feature>
<feature type="binding site" evidence="3">
    <location>
        <position position="508"/>
    </location>
    <ligand>
        <name>Ca(2+)</name>
        <dbReference type="ChEBI" id="CHEBI:29108"/>
        <label>4</label>
    </ligand>
</feature>
<feature type="binding site" evidence="3">
    <location>
        <position position="510"/>
    </location>
    <ligand>
        <name>Ca(2+)</name>
        <dbReference type="ChEBI" id="CHEBI:29108"/>
        <label>4</label>
    </ligand>
</feature>
<feature type="binding site" evidence="3">
    <location>
        <position position="512"/>
    </location>
    <ligand>
        <name>Ca(2+)</name>
        <dbReference type="ChEBI" id="CHEBI:29108"/>
        <label>4</label>
    </ligand>
</feature>
<feature type="binding site" evidence="3">
    <location>
        <position position="517"/>
    </location>
    <ligand>
        <name>Ca(2+)</name>
        <dbReference type="ChEBI" id="CHEBI:29108"/>
        <label>4</label>
    </ligand>
</feature>
<feature type="lipid moiety-binding region" description="N-myristoyl glycine" evidence="8">
    <location>
        <position position="2"/>
    </location>
</feature>
<feature type="splice variant" id="VSP_061065" description="In isoform 2." evidence="14">
    <location>
        <begin position="1"/>
        <end position="56"/>
    </location>
</feature>
<feature type="mutagenesis site" description="Impaired exflagellation of male gametocytes which are arrested at the first round of DNA replication. Assembly of the mitotic spindle is normal. No effect on CDPK4 localization; however, a minor CDPK4 population fails to localize to the plasma membrane and to chromatin." evidence="8">
    <original>G</original>
    <variation>A</variation>
    <location>
        <position position="2"/>
    </location>
</feature>
<feature type="mutagenesis site" description="Loss of the short isoform. In male gametocytes, DNA replication and axoneme assembly are normal, but exflagellation is severely reduced." evidence="8">
    <original>M</original>
    <variation>A</variation>
    <location>
        <position position="57"/>
    </location>
</feature>
<feature type="mutagenesis site" description="No defect in male gametogenesis. No defect in sporozoite infection of host hepatocytes. Severe reduction in sensitivity to compound 1294 inhibition." evidence="8 10">
    <original>S</original>
    <variation>M</variation>
    <location>
        <position position="147"/>
    </location>
</feature>
<name>CDPK4_PLABA</name>
<dbReference type="EC" id="2.7.11.1" evidence="6"/>
<dbReference type="EMBL" id="AY555067">
    <property type="protein sequence ID" value="AAS99650.1"/>
    <property type="molecule type" value="mRNA"/>
</dbReference>
<dbReference type="EMBL" id="LK023121">
    <property type="protein sequence ID" value="VUC54827.1"/>
    <property type="molecule type" value="Genomic_DNA"/>
</dbReference>
<dbReference type="RefSeq" id="XP_676632.1">
    <property type="nucleotide sequence ID" value="XM_671540.1"/>
</dbReference>
<dbReference type="SMR" id="P62345"/>
<dbReference type="FunCoup" id="P62345">
    <property type="interactions" value="3"/>
</dbReference>
<dbReference type="STRING" id="5823.A0A509AH59"/>
<dbReference type="iPTMnet" id="P62345"/>
<dbReference type="VEuPathDB" id="PlasmoDB:PBANKA_0615200"/>
<dbReference type="eggNOG" id="KOG0032">
    <property type="taxonomic scope" value="Eukaryota"/>
</dbReference>
<dbReference type="HOGENOM" id="CLU_000288_37_4_1"/>
<dbReference type="InParanoid" id="P62345"/>
<dbReference type="OMA" id="LEHEWIR"/>
<dbReference type="Proteomes" id="UP000074855">
    <property type="component" value="Chromosome 6"/>
</dbReference>
<dbReference type="GO" id="GO:0005694">
    <property type="term" value="C:chromosome"/>
    <property type="evidence" value="ECO:0007669"/>
    <property type="project" value="UniProtKB-SubCell"/>
</dbReference>
<dbReference type="GO" id="GO:0005737">
    <property type="term" value="C:cytoplasm"/>
    <property type="evidence" value="ECO:0000314"/>
    <property type="project" value="UniProtKB"/>
</dbReference>
<dbReference type="GO" id="GO:0016020">
    <property type="term" value="C:membrane"/>
    <property type="evidence" value="ECO:0000314"/>
    <property type="project" value="UniProtKB"/>
</dbReference>
<dbReference type="GO" id="GO:0005634">
    <property type="term" value="C:nucleus"/>
    <property type="evidence" value="ECO:0000314"/>
    <property type="project" value="UniProtKB"/>
</dbReference>
<dbReference type="GO" id="GO:0005524">
    <property type="term" value="F:ATP binding"/>
    <property type="evidence" value="ECO:0007669"/>
    <property type="project" value="UniProtKB-KW"/>
</dbReference>
<dbReference type="GO" id="GO:0005509">
    <property type="term" value="F:calcium ion binding"/>
    <property type="evidence" value="ECO:0007669"/>
    <property type="project" value="InterPro"/>
</dbReference>
<dbReference type="GO" id="GO:1904931">
    <property type="term" value="F:MCM complex binding"/>
    <property type="evidence" value="ECO:0000314"/>
    <property type="project" value="UniProtKB"/>
</dbReference>
<dbReference type="GO" id="GO:0106310">
    <property type="term" value="F:protein serine kinase activity"/>
    <property type="evidence" value="ECO:0007669"/>
    <property type="project" value="RHEA"/>
</dbReference>
<dbReference type="GO" id="GO:0004674">
    <property type="term" value="F:protein serine/threonine kinase activity"/>
    <property type="evidence" value="ECO:0007669"/>
    <property type="project" value="UniProtKB-KW"/>
</dbReference>
<dbReference type="GO" id="GO:0030154">
    <property type="term" value="P:cell differentiation"/>
    <property type="evidence" value="ECO:0007669"/>
    <property type="project" value="UniProtKB-KW"/>
</dbReference>
<dbReference type="GO" id="GO:0048232">
    <property type="term" value="P:male gamete generation"/>
    <property type="evidence" value="ECO:0000315"/>
    <property type="project" value="UniProtKB"/>
</dbReference>
<dbReference type="GO" id="GO:0140530">
    <property type="term" value="P:MCM complex loading"/>
    <property type="evidence" value="ECO:0000315"/>
    <property type="project" value="UniProtKB"/>
</dbReference>
<dbReference type="GO" id="GO:2000147">
    <property type="term" value="P:positive regulation of cell motility"/>
    <property type="evidence" value="ECO:0000315"/>
    <property type="project" value="UniProtKB"/>
</dbReference>
<dbReference type="GO" id="GO:0003353">
    <property type="term" value="P:positive regulation of cilium movement"/>
    <property type="evidence" value="ECO:0000315"/>
    <property type="project" value="UniProtKB"/>
</dbReference>
<dbReference type="GO" id="GO:0032298">
    <property type="term" value="P:positive regulation of DNA-templated DNA replication initiation"/>
    <property type="evidence" value="ECO:0000315"/>
    <property type="project" value="UniProtKB"/>
</dbReference>
<dbReference type="GO" id="GO:1901673">
    <property type="term" value="P:regulation of mitotic spindle assembly"/>
    <property type="evidence" value="ECO:0000315"/>
    <property type="project" value="UniProtKB"/>
</dbReference>
<dbReference type="CDD" id="cd00051">
    <property type="entry name" value="EFh"/>
    <property type="match status" value="2"/>
</dbReference>
<dbReference type="CDD" id="cd05117">
    <property type="entry name" value="STKc_CAMK"/>
    <property type="match status" value="1"/>
</dbReference>
<dbReference type="FunFam" id="3.30.200.20:FF:000315">
    <property type="entry name" value="Calcium-dependent protein kinase 3"/>
    <property type="match status" value="1"/>
</dbReference>
<dbReference type="FunFam" id="1.10.238.10:FF:000174">
    <property type="entry name" value="Calcium-dependent protein kinase 4"/>
    <property type="match status" value="1"/>
</dbReference>
<dbReference type="FunFam" id="1.10.510.10:FF:000568">
    <property type="entry name" value="Calmodulin-domain protein kinase 1"/>
    <property type="match status" value="1"/>
</dbReference>
<dbReference type="Gene3D" id="1.10.238.10">
    <property type="entry name" value="EF-hand"/>
    <property type="match status" value="2"/>
</dbReference>
<dbReference type="Gene3D" id="3.30.200.20">
    <property type="entry name" value="Phosphorylase Kinase, domain 1"/>
    <property type="match status" value="1"/>
</dbReference>
<dbReference type="Gene3D" id="1.10.510.10">
    <property type="entry name" value="Transferase(Phosphotransferase) domain 1"/>
    <property type="match status" value="1"/>
</dbReference>
<dbReference type="InterPro" id="IPR050205">
    <property type="entry name" value="CDPK_Ser/Thr_kinases"/>
</dbReference>
<dbReference type="InterPro" id="IPR011992">
    <property type="entry name" value="EF-hand-dom_pair"/>
</dbReference>
<dbReference type="InterPro" id="IPR018247">
    <property type="entry name" value="EF_Hand_1_Ca_BS"/>
</dbReference>
<dbReference type="InterPro" id="IPR002048">
    <property type="entry name" value="EF_hand_dom"/>
</dbReference>
<dbReference type="InterPro" id="IPR011009">
    <property type="entry name" value="Kinase-like_dom_sf"/>
</dbReference>
<dbReference type="InterPro" id="IPR000719">
    <property type="entry name" value="Prot_kinase_dom"/>
</dbReference>
<dbReference type="InterPro" id="IPR017441">
    <property type="entry name" value="Protein_kinase_ATP_BS"/>
</dbReference>
<dbReference type="InterPro" id="IPR008271">
    <property type="entry name" value="Ser/Thr_kinase_AS"/>
</dbReference>
<dbReference type="PANTHER" id="PTHR24349">
    <property type="entry name" value="SERINE/THREONINE-PROTEIN KINASE"/>
    <property type="match status" value="1"/>
</dbReference>
<dbReference type="Pfam" id="PF13499">
    <property type="entry name" value="EF-hand_7"/>
    <property type="match status" value="2"/>
</dbReference>
<dbReference type="Pfam" id="PF00069">
    <property type="entry name" value="Pkinase"/>
    <property type="match status" value="1"/>
</dbReference>
<dbReference type="SMART" id="SM00054">
    <property type="entry name" value="EFh"/>
    <property type="match status" value="4"/>
</dbReference>
<dbReference type="SMART" id="SM00220">
    <property type="entry name" value="S_TKc"/>
    <property type="match status" value="1"/>
</dbReference>
<dbReference type="SUPFAM" id="SSF47473">
    <property type="entry name" value="EF-hand"/>
    <property type="match status" value="1"/>
</dbReference>
<dbReference type="SUPFAM" id="SSF56112">
    <property type="entry name" value="Protein kinase-like (PK-like)"/>
    <property type="match status" value="1"/>
</dbReference>
<dbReference type="PROSITE" id="PS00018">
    <property type="entry name" value="EF_HAND_1"/>
    <property type="match status" value="4"/>
</dbReference>
<dbReference type="PROSITE" id="PS50222">
    <property type="entry name" value="EF_HAND_2"/>
    <property type="match status" value="4"/>
</dbReference>
<dbReference type="PROSITE" id="PS00107">
    <property type="entry name" value="PROTEIN_KINASE_ATP"/>
    <property type="match status" value="1"/>
</dbReference>
<dbReference type="PROSITE" id="PS50011">
    <property type="entry name" value="PROTEIN_KINASE_DOM"/>
    <property type="match status" value="1"/>
</dbReference>
<dbReference type="PROSITE" id="PS00108">
    <property type="entry name" value="PROTEIN_KINASE_ST"/>
    <property type="match status" value="1"/>
</dbReference>
<organism evidence="18">
    <name type="scientific">Plasmodium berghei (strain Anka)</name>
    <dbReference type="NCBI Taxonomy" id="5823"/>
    <lineage>
        <taxon>Eukaryota</taxon>
        <taxon>Sar</taxon>
        <taxon>Alveolata</taxon>
        <taxon>Apicomplexa</taxon>
        <taxon>Aconoidasida</taxon>
        <taxon>Haemosporida</taxon>
        <taxon>Plasmodiidae</taxon>
        <taxon>Plasmodium</taxon>
        <taxon>Plasmodium (Vinckeia)</taxon>
    </lineage>
</organism>
<comment type="function">
    <text evidence="6 7 8 9 10">Calcium-dependent protein kinase which acts as a sensor and effector of intracellular Ca(2+) levels probably in part downstream of cGMP-activated PKG kinase (PubMed:15137943). Plays a central role in the host erythrocytes and hepatocytes infection cycles, sexual reproduction and mosquito transmission of the parasite (PubMed:15137943, PubMed:27425827, PubMed:28481199, PubMed:30315162, PubMed:32866196). During the liver stage, involved in sporozoite motility and thus in sporozoite invasion of host hepatocytes, probably together with CDPK1 and CDPK5 (PubMed:27425827, PubMed:32866196). Involved in merosome egress from host hepatocytes, probably together with CDPK5 (PubMed:32866196). During the asexual blood stage, involved in merozoite invasion of host erythrocytes and motility by stabilizing the inner membrane complex, a structure below the plasma membrane which acts as an anchor for the glidosome, an acto-myosin motor (PubMed:30315162). Required for cell cycle progression in the male gametocyte (PubMed:15137943, PubMed:28481199, PubMed:30315162). During male gametogenesis in the mosquito gut, required to initiate the first round of DNA replication, probably by facilitating the assembly of the pre-replicative MCM complex, to assemble the first mitotic spindle and, at the end of gametogenesis, to initiate axoneme motility, cytokinesis and subsequent exflagellation (PubMed:28481199). For each of these steps, may phosphorylate SOC1, SOC2 and SOC3, respectively (PubMed:28481199). Together with CDPK1, regulates ookinete gliding in the mosquito host midgut (PubMed:30315162).</text>
</comment>
<comment type="function">
    <molecule>Isoform 1</molecule>
    <text evidence="8">During male gametogenesis in the mosquito gut, required to initiate the first round of DNA replication, probably by facilitating the assembly of the pre-replicative MCM complex, and to assemble the first mitotic spindle.</text>
</comment>
<comment type="function">
    <molecule>Isoform 2</molecule>
    <text evidence="8">At the end of male gametogenesis in the mosquito gut, required to initiate axoneme motility, cytokinesis and subsequent exflagellation.</text>
</comment>
<comment type="catalytic activity">
    <reaction evidence="6">
        <text>L-seryl-[protein] + ATP = O-phospho-L-seryl-[protein] + ADP + H(+)</text>
        <dbReference type="Rhea" id="RHEA:17989"/>
        <dbReference type="Rhea" id="RHEA-COMP:9863"/>
        <dbReference type="Rhea" id="RHEA-COMP:11604"/>
        <dbReference type="ChEBI" id="CHEBI:15378"/>
        <dbReference type="ChEBI" id="CHEBI:29999"/>
        <dbReference type="ChEBI" id="CHEBI:30616"/>
        <dbReference type="ChEBI" id="CHEBI:83421"/>
        <dbReference type="ChEBI" id="CHEBI:456216"/>
        <dbReference type="EC" id="2.7.11.1"/>
    </reaction>
</comment>
<comment type="catalytic activity">
    <reaction evidence="6">
        <text>L-threonyl-[protein] + ATP = O-phospho-L-threonyl-[protein] + ADP + H(+)</text>
        <dbReference type="Rhea" id="RHEA:46608"/>
        <dbReference type="Rhea" id="RHEA-COMP:11060"/>
        <dbReference type="Rhea" id="RHEA-COMP:11605"/>
        <dbReference type="ChEBI" id="CHEBI:15378"/>
        <dbReference type="ChEBI" id="CHEBI:30013"/>
        <dbReference type="ChEBI" id="CHEBI:30616"/>
        <dbReference type="ChEBI" id="CHEBI:61977"/>
        <dbReference type="ChEBI" id="CHEBI:456216"/>
        <dbReference type="EC" id="2.7.11.1"/>
    </reaction>
</comment>
<comment type="cofactor">
    <cofactor evidence="1">
        <name>Mg(2+)</name>
        <dbReference type="ChEBI" id="CHEBI:18420"/>
    </cofactor>
</comment>
<comment type="activity regulation">
    <text evidence="1 6 15">Activated by calcium (PubMed:15137943). Upon calcium binding to the EF-hand domains, the C-terminus of the junction domain (J domain) undergoes a conformational change which results in the dissociation of the pseudo-substrate inhibitory motif from the catalytic domain (By similarity). This, in turn, may facilitate the autophosphorylation of the activation loop at Thr-234, which leads to the kinase activation (By similarity). Intracellular calcium increase is triggered by xanthurenic acid (XA), a small mosquito molecule that induces the differentiation of specialized transmission stages, the gametocytes, into male and female gametes (Probable). Activated by a decrease in temperature (20 degrees Celsius) and an increase in pH (7.6) occurring when the parasite is ingested by in the mosquito (By similarity).</text>
</comment>
<comment type="subunit">
    <text evidence="8">May interact with the pre-replication MCM complex prior male gametogenesis activation.</text>
</comment>
<comment type="subcellular location">
    <subcellularLocation>
        <location evidence="9">Cytoplasm</location>
    </subcellularLocation>
</comment>
<comment type="subcellular location">
    <molecule>Isoform 1</molecule>
    <subcellularLocation>
        <location evidence="8">Cytoplasm</location>
    </subcellularLocation>
    <subcellularLocation>
        <location evidence="8">Membrane</location>
        <topology evidence="8">Lipid-anchor</topology>
    </subcellularLocation>
    <subcellularLocation>
        <location evidence="8">Chromosome</location>
    </subcellularLocation>
    <text evidence="8">A small fraction of the protein localizes to membranes and to chromatin.</text>
</comment>
<comment type="alternative products">
    <event type="alternative initiation"/>
    <isoform>
        <id>P62345-1</id>
        <name>1</name>
        <name evidence="13">large</name>
        <sequence type="displayed"/>
    </isoform>
    <isoform>
        <id>P62345-2</id>
        <name>2</name>
        <name evidence="13">short</name>
        <sequence type="described" ref="VSP_061065"/>
    </isoform>
</comment>
<comment type="developmental stage">
    <text evidence="6 7 8">Expressed in sporozoites and in liver stages (at protein level) (PubMed:27425827). Highly expressed in male gametocytes and exflagellated gametes, and to a lesser extent, in female gametocytes (at protein level) (PubMed:15137943, PubMed:28481199). Expressed in ookinetes (PubMed:15137943). Weakly or not expressed in asexual parasite stages (PubMed:15137943).</text>
</comment>
<comment type="domain">
    <text evidence="1">The junction domain (J domain) is composed of 2 motifs that maintain the kinase inactive. The N-terminal autoinhibitory motif acts as a pseudosubstrate inhibiting the catalytic domain while the C-terminal motif binds the EF-hand domains.</text>
</comment>
<comment type="PTM">
    <molecule>Isoform 1</molecule>
    <text evidence="8">Myristoylated; myristoylation may target it to different subcellular compartments (PubMed:28481199). During male gametogenesis, myristoylation is required to initiate DNA replication but not for mitotic spindle assembly or axoneme activation (PubMed:28481199).</text>
</comment>
<comment type="PTM">
    <molecule>Isoform 1</molecule>
    <text evidence="8">Not palmitoylated.</text>
</comment>
<comment type="PTM">
    <text evidence="1">May be autophosphorylated on Thr-234 in vitro.</text>
</comment>
<comment type="disruption phenotype">
    <text evidence="7 8 9">Host hepatocyte invasion is reduced in knockout sporozoites; the few intracellular parasites develop and egress normally (PubMed:27425827). In infected mice, formation of schizonts and merozoite invasion of host erythrocytes are normal (PubMed:30315162). In a PKG T622Q mutant background, reduces ring formation and thus the number of schizonts (PubMed:30315162). In addition, merozoites have a discontinuous inner membrane complex (PubMed:30315162). Impaired exflagellation of male gametocytes which fails to assemble the mitotic spindle and are arrested at the first round of DNA replication (PubMed:28481199). In a PKG T622Q mutant background, male gametocytes fail to exflagellate in the mosquito vector (PubMed:30315162).</text>
</comment>
<comment type="similarity">
    <text evidence="2">Belongs to the protein kinase superfamily. Ser/Thr protein kinase family. CDPK subfamily.</text>
</comment>
<protein>
    <recommendedName>
        <fullName evidence="11">Calcium-dependent protein kinase 4</fullName>
        <ecNumber evidence="6">2.7.11.1</ecNumber>
    </recommendedName>
    <alternativeName>
        <fullName evidence="12">PbCDPK4</fullName>
    </alternativeName>
</protein>
<evidence type="ECO:0000250" key="1">
    <source>
        <dbReference type="UniProtKB" id="Q8IBS5"/>
    </source>
</evidence>
<evidence type="ECO:0000255" key="2">
    <source>
        <dbReference type="PROSITE-ProRule" id="PRU00159"/>
    </source>
</evidence>
<evidence type="ECO:0000255" key="3">
    <source>
        <dbReference type="PROSITE-ProRule" id="PRU00448"/>
    </source>
</evidence>
<evidence type="ECO:0000255" key="4">
    <source>
        <dbReference type="PROSITE-ProRule" id="PRU10027"/>
    </source>
</evidence>
<evidence type="ECO:0000256" key="5">
    <source>
        <dbReference type="SAM" id="MobiDB-lite"/>
    </source>
</evidence>
<evidence type="ECO:0000269" key="6">
    <source>
    </source>
</evidence>
<evidence type="ECO:0000269" key="7">
    <source>
    </source>
</evidence>
<evidence type="ECO:0000269" key="8">
    <source>
    </source>
</evidence>
<evidence type="ECO:0000269" key="9">
    <source>
    </source>
</evidence>
<evidence type="ECO:0000269" key="10">
    <source>
    </source>
</evidence>
<evidence type="ECO:0000303" key="11">
    <source>
    </source>
</evidence>
<evidence type="ECO:0000303" key="12">
    <source>
    </source>
</evidence>
<evidence type="ECO:0000303" key="13">
    <source>
    </source>
</evidence>
<evidence type="ECO:0000305" key="14"/>
<evidence type="ECO:0000305" key="15">
    <source>
    </source>
</evidence>
<evidence type="ECO:0000305" key="16">
    <source>
    </source>
</evidence>
<evidence type="ECO:0000312" key="17">
    <source>
        <dbReference type="EMBL" id="VUC54827.1"/>
    </source>
</evidence>
<evidence type="ECO:0000312" key="18">
    <source>
        <dbReference type="Proteomes" id="UP000074855"/>
    </source>
</evidence>
<reference key="1">
    <citation type="journal article" date="2004" name="Cell">
        <title>Calcium and a calcium-dependent protein kinase regulate gamete formation and mosquito transmission in a malaria parasite.</title>
        <authorList>
            <person name="Billker O."/>
            <person name="Dechamps S."/>
            <person name="Tewari R."/>
            <person name="Wenig G."/>
            <person name="Franke-Fayard B."/>
            <person name="Brinkmann V."/>
        </authorList>
    </citation>
    <scope>NUCLEOTIDE SEQUENCE [MRNA]</scope>
    <scope>FUNCTION</scope>
    <scope>CATALYTIC ACTIVITY</scope>
    <scope>ACTIVITY REGULATION</scope>
    <scope>DEVELOPMENTAL STAGE</scope>
    <scope>AUTOPHOSPHORYLATION</scope>
</reference>
<reference evidence="18" key="2">
    <citation type="journal article" date="2014" name="BMC Biol.">
        <title>A comprehensive evaluation of rodent malaria parasite genomes and gene expression.</title>
        <authorList>
            <person name="Otto T.D."/>
            <person name="Bohme U."/>
            <person name="Jackson A.P."/>
            <person name="Hunt M."/>
            <person name="Franke-Fayard B."/>
            <person name="Hoeijmakers W.A."/>
            <person name="Religa A.A."/>
            <person name="Robertson L."/>
            <person name="Sanders M."/>
            <person name="Ogun S.A."/>
            <person name="Cunningham D."/>
            <person name="Erhart A."/>
            <person name="Billker O."/>
            <person name="Khan S.M."/>
            <person name="Stunnenberg H.G."/>
            <person name="Langhorne J."/>
            <person name="Holder A.A."/>
            <person name="Waters A.P."/>
            <person name="Newbold C.I."/>
            <person name="Pain A."/>
            <person name="Berriman M."/>
            <person name="Janse C.J."/>
        </authorList>
    </citation>
    <scope>NUCLEOTIDE SEQUENCE [LARGE SCALE GENOMIC DNA]</scope>
    <source>
        <strain evidence="18">ANKA</strain>
    </source>
</reference>
<reference key="3">
    <citation type="journal article" date="2016" name="Mol. Microbiol.">
        <title>Invasion of hepatocytes by Plasmodium sporozoites requires cGMP-dependent protein kinase and calcium dependent protein kinase 4.</title>
        <authorList>
            <person name="Govindasamy K."/>
            <person name="Jebiwott S."/>
            <person name="Jaijyan D.K."/>
            <person name="Davidow A."/>
            <person name="Ojo K.K."/>
            <person name="Van Voorhis W.C."/>
            <person name="Brochet M."/>
            <person name="Billker O."/>
            <person name="Bhanot P."/>
        </authorList>
    </citation>
    <scope>FUNCTION</scope>
    <scope>DEVELOPMENTAL STAGE</scope>
    <scope>DISRUPTION PHENOTYPE</scope>
</reference>
<reference key="4">
    <citation type="journal article" date="2017" name="Elife">
        <title>Multiple short windows of calcium-dependent protein kinase 4 activity coordinate distinct cell cycle events during Plasmodium gametogenesis.</title>
        <authorList>
            <person name="Fang H."/>
            <person name="Klages N."/>
            <person name="Baechler B."/>
            <person name="Hillner E."/>
            <person name="Yu L."/>
            <person name="Pardo M."/>
            <person name="Choudhary J."/>
            <person name="Brochet M."/>
        </authorList>
    </citation>
    <scope>FUNCTION</scope>
    <scope>INTERACTION WITH THE MCM COMPLEX</scope>
    <scope>SUBCELLULAR LOCATION</scope>
    <scope>DEVELOPMENTAL STAGE</scope>
    <scope>DISRUPTION PHENOTYPE</scope>
    <scope>MYRISTOYLATION AT GLY-2</scope>
    <scope>MUTAGENESIS OF GLY-2; MET-57 AND SER-147</scope>
</reference>
<reference key="5">
    <citation type="journal article" date="2018" name="Nat. Commun.">
        <title>Epistasis studies reveal redundancy among calcium-dependent protein kinases in motility and invasion of malaria parasites.</title>
        <authorList>
            <person name="Fang H."/>
            <person name="Gomes A.R."/>
            <person name="Klages N."/>
            <person name="Pino P."/>
            <person name="Maco B."/>
            <person name="Walker E.M."/>
            <person name="Zenonos Z.A."/>
            <person name="Angrisano F."/>
            <person name="Baum J."/>
            <person name="Doerig C."/>
            <person name="Baker D.A."/>
            <person name="Billker O."/>
            <person name="Brochet M."/>
        </authorList>
    </citation>
    <scope>FUNCTION</scope>
    <scope>SUBCELLULAR LOCATION</scope>
    <scope>DISRUPTION PHENOTYPE</scope>
</reference>
<reference key="6">
    <citation type="journal article" date="2020" name="PLoS Pathog.">
        <title>Overlapping and distinct roles of CDPK family members in the pre-erythrocytic stages of the rodent malaria parasite, Plasmodium berghei.</title>
        <authorList>
            <person name="Govindasamy K."/>
            <person name="Bhanot P."/>
        </authorList>
    </citation>
    <scope>FUNCTION</scope>
    <scope>MUTAGENESIS OF SER-147</scope>
</reference>
<gene>
    <name evidence="11" type="primary">CDPK4</name>
    <name evidence="14" type="synonym">CPK4</name>
    <name evidence="17" type="ORF">PBANKA_0615200</name>
</gene>
<accession>P62345</accession>
<accession>A0A509AH59</accession>
<proteinExistence type="evidence at protein level"/>
<sequence>MGQEMSTQSDMQNENQKGNKRNLKGSQGKNGLKERSTSISKEIVKNSFNNSKLRPGMFIQNSNVVFNEQYKGIKILGKGSFGEVILSKDKHTGHEYAIKVISKKHVKRKTDKQSLLREVELLKMLDHINIMKLYEFFEDNNYYYLVSDVYSGGELFDEIISRKRFYEVDAARIIKQVLSGITYMHKNNVVHRDLKPENILLETKNKEDMIIKIIDFGLSTHFEYSKKMKDKIGTAYYIAPDVLHGTYDEKCDIWSCGVILYILLSGCPPFNGSNEYDILKKVETGKYTFDLPQFKKISDKAKDLIKKMLMYTSAVRISARDALEHEWIRLMTSKDNVNIDIPSLELSITNIKQFQSTQKLAQAALLYMGSKLTTIDETKELTKIFKKMDKNGDGQLDRNELIIGYKELLKLKGDDTTDLDNAAIEVEVDQILSSIDLDQNGYIEYSEFLTVAIDRKLLLSTERLEKAFKLFDKDGSGKISANELAQLFGLGDVSSDCWKTVLKEVDQNNDGEIDFKEFRDMLIKLCNY</sequence>